<accession>E7EZG2</accession>
<feature type="chain" id="PRO_0000447239" description="Unconventional myosin-IXAa">
    <location>
        <begin position="1"/>
        <end position="2522"/>
    </location>
</feature>
<feature type="transmembrane region" description="Helical" evidence="4">
    <location>
        <begin position="176"/>
        <end position="196"/>
    </location>
</feature>
<feature type="domain" description="Ras-associating" evidence="6">
    <location>
        <begin position="15"/>
        <end position="113"/>
    </location>
</feature>
<feature type="domain" description="Myosin motor" evidence="9">
    <location>
        <begin position="147"/>
        <end position="1007"/>
    </location>
</feature>
<feature type="domain" description="IQ 1" evidence="5">
    <location>
        <begin position="1012"/>
        <end position="1039"/>
    </location>
</feature>
<feature type="domain" description="IQ 2" evidence="5">
    <location>
        <begin position="1063"/>
        <end position="1092"/>
    </location>
</feature>
<feature type="domain" description="IQ 3" evidence="5">
    <location>
        <begin position="1102"/>
        <end position="1131"/>
    </location>
</feature>
<feature type="domain" description="IQ 4" evidence="5">
    <location>
        <begin position="1125"/>
        <end position="1154"/>
    </location>
</feature>
<feature type="domain" description="Rho-GAP" evidence="7">
    <location>
        <begin position="2054"/>
        <end position="2242"/>
    </location>
</feature>
<feature type="zinc finger region" description="Phorbol-ester/DAG-type" evidence="8">
    <location>
        <begin position="1990"/>
        <end position="2039"/>
    </location>
</feature>
<feature type="region of interest" description="Disordered" evidence="10">
    <location>
        <begin position="767"/>
        <end position="802"/>
    </location>
</feature>
<feature type="region of interest" description="Actin-binding" evidence="9">
    <location>
        <begin position="888"/>
        <end position="910"/>
    </location>
</feature>
<feature type="region of interest" description="Neck or regulatory domain" evidence="1">
    <location>
        <begin position="1012"/>
        <end position="1149"/>
    </location>
</feature>
<feature type="region of interest" description="Tail" evidence="1">
    <location>
        <begin position="1150"/>
        <end position="2497"/>
    </location>
</feature>
<feature type="region of interest" description="Disordered" evidence="10">
    <location>
        <begin position="1218"/>
        <end position="1254"/>
    </location>
</feature>
<feature type="region of interest" description="Disordered" evidence="10">
    <location>
        <begin position="1318"/>
        <end position="1409"/>
    </location>
</feature>
<feature type="region of interest" description="Disordered" evidence="10">
    <location>
        <begin position="1424"/>
        <end position="1612"/>
    </location>
</feature>
<feature type="region of interest" description="Disordered" evidence="10">
    <location>
        <begin position="1630"/>
        <end position="1754"/>
    </location>
</feature>
<feature type="region of interest" description="Disordered" evidence="10">
    <location>
        <begin position="1799"/>
        <end position="1827"/>
    </location>
</feature>
<feature type="region of interest" description="Disordered" evidence="10">
    <location>
        <begin position="1962"/>
        <end position="1983"/>
    </location>
</feature>
<feature type="region of interest" description="Disordered" evidence="10">
    <location>
        <begin position="2274"/>
        <end position="2325"/>
    </location>
</feature>
<feature type="region of interest" description="Disordered" evidence="10">
    <location>
        <begin position="2348"/>
        <end position="2522"/>
    </location>
</feature>
<feature type="coiled-coil region" evidence="4">
    <location>
        <begin position="1456"/>
        <end position="1525"/>
    </location>
</feature>
<feature type="coiled-coil region" evidence="4">
    <location>
        <begin position="2317"/>
        <end position="2344"/>
    </location>
</feature>
<feature type="compositionally biased region" description="Polar residues" evidence="10">
    <location>
        <begin position="777"/>
        <end position="786"/>
    </location>
</feature>
<feature type="compositionally biased region" description="Basic and acidic residues" evidence="10">
    <location>
        <begin position="1229"/>
        <end position="1242"/>
    </location>
</feature>
<feature type="compositionally biased region" description="Polar residues" evidence="10">
    <location>
        <begin position="1330"/>
        <end position="1349"/>
    </location>
</feature>
<feature type="compositionally biased region" description="Polar residues" evidence="10">
    <location>
        <begin position="1366"/>
        <end position="1390"/>
    </location>
</feature>
<feature type="compositionally biased region" description="Basic and acidic residues" evidence="10">
    <location>
        <begin position="1399"/>
        <end position="1408"/>
    </location>
</feature>
<feature type="compositionally biased region" description="Basic and acidic residues" evidence="10">
    <location>
        <begin position="1426"/>
        <end position="1435"/>
    </location>
</feature>
<feature type="compositionally biased region" description="Polar residues" evidence="10">
    <location>
        <begin position="1437"/>
        <end position="1454"/>
    </location>
</feature>
<feature type="compositionally biased region" description="Basic and acidic residues" evidence="10">
    <location>
        <begin position="1458"/>
        <end position="1484"/>
    </location>
</feature>
<feature type="compositionally biased region" description="Basic and acidic residues" evidence="10">
    <location>
        <begin position="1492"/>
        <end position="1523"/>
    </location>
</feature>
<feature type="compositionally biased region" description="Basic and acidic residues" evidence="10">
    <location>
        <begin position="1549"/>
        <end position="1566"/>
    </location>
</feature>
<feature type="compositionally biased region" description="Basic and acidic residues" evidence="10">
    <location>
        <begin position="1580"/>
        <end position="1589"/>
    </location>
</feature>
<feature type="compositionally biased region" description="Polar residues" evidence="10">
    <location>
        <begin position="1594"/>
        <end position="1604"/>
    </location>
</feature>
<feature type="compositionally biased region" description="Polar residues" evidence="10">
    <location>
        <begin position="1631"/>
        <end position="1641"/>
    </location>
</feature>
<feature type="compositionally biased region" description="Basic residues" evidence="10">
    <location>
        <begin position="1656"/>
        <end position="1665"/>
    </location>
</feature>
<feature type="compositionally biased region" description="Acidic residues" evidence="10">
    <location>
        <begin position="1681"/>
        <end position="1690"/>
    </location>
</feature>
<feature type="compositionally biased region" description="Basic and acidic residues" evidence="10">
    <location>
        <begin position="1738"/>
        <end position="1753"/>
    </location>
</feature>
<feature type="compositionally biased region" description="Basic and acidic residues" evidence="10">
    <location>
        <begin position="1810"/>
        <end position="1822"/>
    </location>
</feature>
<feature type="compositionally biased region" description="Polar residues" evidence="10">
    <location>
        <begin position="2366"/>
        <end position="2383"/>
    </location>
</feature>
<feature type="compositionally biased region" description="Low complexity" evidence="10">
    <location>
        <begin position="2413"/>
        <end position="2429"/>
    </location>
</feature>
<feature type="compositionally biased region" description="Basic residues" evidence="10">
    <location>
        <begin position="2436"/>
        <end position="2448"/>
    </location>
</feature>
<feature type="compositionally biased region" description="Basic and acidic residues" evidence="10">
    <location>
        <begin position="2497"/>
        <end position="2506"/>
    </location>
</feature>
<feature type="binding site" evidence="9">
    <location>
        <begin position="240"/>
        <end position="247"/>
    </location>
    <ligand>
        <name>ATP</name>
        <dbReference type="ChEBI" id="CHEBI:30616"/>
    </ligand>
</feature>
<feature type="site" description="Arginine finger; crucial for GTP hydrolysis by stabilizing the transition state" evidence="7">
    <location>
        <position position="2089"/>
    </location>
</feature>
<reference key="1">
    <citation type="journal article" date="2013" name="Nature">
        <title>The zebrafish reference genome sequence and its relationship to the human genome.</title>
        <authorList>
            <person name="Howe K."/>
            <person name="Clark M.D."/>
            <person name="Torroja C.F."/>
            <person name="Torrance J."/>
            <person name="Berthelot C."/>
            <person name="Muffato M."/>
            <person name="Collins J.E."/>
            <person name="Humphray S."/>
            <person name="McLaren K."/>
            <person name="Matthews L."/>
            <person name="McLaren S."/>
            <person name="Sealy I."/>
            <person name="Caccamo M."/>
            <person name="Churcher C."/>
            <person name="Scott C."/>
            <person name="Barrett J.C."/>
            <person name="Koch R."/>
            <person name="Rauch G.J."/>
            <person name="White S."/>
            <person name="Chow W."/>
            <person name="Kilian B."/>
            <person name="Quintais L.T."/>
            <person name="Guerra-Assuncao J.A."/>
            <person name="Zhou Y."/>
            <person name="Gu Y."/>
            <person name="Yen J."/>
            <person name="Vogel J.H."/>
            <person name="Eyre T."/>
            <person name="Redmond S."/>
            <person name="Banerjee R."/>
            <person name="Chi J."/>
            <person name="Fu B."/>
            <person name="Langley E."/>
            <person name="Maguire S.F."/>
            <person name="Laird G.K."/>
            <person name="Lloyd D."/>
            <person name="Kenyon E."/>
            <person name="Donaldson S."/>
            <person name="Sehra H."/>
            <person name="Almeida-King J."/>
            <person name="Loveland J."/>
            <person name="Trevanion S."/>
            <person name="Jones M."/>
            <person name="Quail M."/>
            <person name="Willey D."/>
            <person name="Hunt A."/>
            <person name="Burton J."/>
            <person name="Sims S."/>
            <person name="McLay K."/>
            <person name="Plumb B."/>
            <person name="Davis J."/>
            <person name="Clee C."/>
            <person name="Oliver K."/>
            <person name="Clark R."/>
            <person name="Riddle C."/>
            <person name="Elliot D."/>
            <person name="Threadgold G."/>
            <person name="Harden G."/>
            <person name="Ware D."/>
            <person name="Begum S."/>
            <person name="Mortimore B."/>
            <person name="Kerry G."/>
            <person name="Heath P."/>
            <person name="Phillimore B."/>
            <person name="Tracey A."/>
            <person name="Corby N."/>
            <person name="Dunn M."/>
            <person name="Johnson C."/>
            <person name="Wood J."/>
            <person name="Clark S."/>
            <person name="Pelan S."/>
            <person name="Griffiths G."/>
            <person name="Smith M."/>
            <person name="Glithero R."/>
            <person name="Howden P."/>
            <person name="Barker N."/>
            <person name="Lloyd C."/>
            <person name="Stevens C."/>
            <person name="Harley J."/>
            <person name="Holt K."/>
            <person name="Panagiotidis G."/>
            <person name="Lovell J."/>
            <person name="Beasley H."/>
            <person name="Henderson C."/>
            <person name="Gordon D."/>
            <person name="Auger K."/>
            <person name="Wright D."/>
            <person name="Collins J."/>
            <person name="Raisen C."/>
            <person name="Dyer L."/>
            <person name="Leung K."/>
            <person name="Robertson L."/>
            <person name="Ambridge K."/>
            <person name="Leongamornlert D."/>
            <person name="McGuire S."/>
            <person name="Gilderthorp R."/>
            <person name="Griffiths C."/>
            <person name="Manthravadi D."/>
            <person name="Nichol S."/>
            <person name="Barker G."/>
            <person name="Whitehead S."/>
            <person name="Kay M."/>
            <person name="Brown J."/>
            <person name="Murnane C."/>
            <person name="Gray E."/>
            <person name="Humphries M."/>
            <person name="Sycamore N."/>
            <person name="Barker D."/>
            <person name="Saunders D."/>
            <person name="Wallis J."/>
            <person name="Babbage A."/>
            <person name="Hammond S."/>
            <person name="Mashreghi-Mohammadi M."/>
            <person name="Barr L."/>
            <person name="Martin S."/>
            <person name="Wray P."/>
            <person name="Ellington A."/>
            <person name="Matthews N."/>
            <person name="Ellwood M."/>
            <person name="Woodmansey R."/>
            <person name="Clark G."/>
            <person name="Cooper J."/>
            <person name="Tromans A."/>
            <person name="Grafham D."/>
            <person name="Skuce C."/>
            <person name="Pandian R."/>
            <person name="Andrews R."/>
            <person name="Harrison E."/>
            <person name="Kimberley A."/>
            <person name="Garnett J."/>
            <person name="Fosker N."/>
            <person name="Hall R."/>
            <person name="Garner P."/>
            <person name="Kelly D."/>
            <person name="Bird C."/>
            <person name="Palmer S."/>
            <person name="Gehring I."/>
            <person name="Berger A."/>
            <person name="Dooley C.M."/>
            <person name="Ersan-Urun Z."/>
            <person name="Eser C."/>
            <person name="Geiger H."/>
            <person name="Geisler M."/>
            <person name="Karotki L."/>
            <person name="Kirn A."/>
            <person name="Konantz J."/>
            <person name="Konantz M."/>
            <person name="Oberlander M."/>
            <person name="Rudolph-Geiger S."/>
            <person name="Teucke M."/>
            <person name="Lanz C."/>
            <person name="Raddatz G."/>
            <person name="Osoegawa K."/>
            <person name="Zhu B."/>
            <person name="Rapp A."/>
            <person name="Widaa S."/>
            <person name="Langford C."/>
            <person name="Yang F."/>
            <person name="Schuster S.C."/>
            <person name="Carter N.P."/>
            <person name="Harrow J."/>
            <person name="Ning Z."/>
            <person name="Herrero J."/>
            <person name="Searle S.M."/>
            <person name="Enright A."/>
            <person name="Geisler R."/>
            <person name="Plasterk R.H."/>
            <person name="Lee C."/>
            <person name="Westerfield M."/>
            <person name="de Jong P.J."/>
            <person name="Zon L.I."/>
            <person name="Postlethwait J.H."/>
            <person name="Nusslein-Volhard C."/>
            <person name="Hubbard T.J."/>
            <person name="Roest Crollius H."/>
            <person name="Rogers J."/>
            <person name="Stemple D.L."/>
        </authorList>
    </citation>
    <scope>NUCLEOTIDE SEQUENCE [LARGE SCALE GENOMIC DNA]</scope>
    <source>
        <strain>Tuebingen</strain>
    </source>
</reference>
<reference key="2">
    <citation type="journal article" date="2016" name="Brain">
        <title>Identification of mutations in the MYO9A gene in patients with congenital myasthenic syndrome.</title>
        <authorList>
            <person name="O'Connor E."/>
            <person name="Toepf A."/>
            <person name="Mueller J.S."/>
            <person name="Cox D."/>
            <person name="Evangelista T."/>
            <person name="Colomer J."/>
            <person name="Abicht A."/>
            <person name="Senderek J."/>
            <person name="Hasselmann O."/>
            <person name="Yaramis A."/>
            <person name="Laval S.H."/>
            <person name="Lochmueller H."/>
        </authorList>
    </citation>
    <scope>FUNCTION</scope>
    <scope>DISRUPTION PHENOTYPE</scope>
</reference>
<comment type="function">
    <text evidence="3 11">Myosins are actin-based motor molecules with ATPase activity. Unconventional myosins serve in intracellular movements. Regulates Rho by stimulating it's GTPase activity in neurons (By similarity). Required for the regulation of neurite branching and motor neuron axon guidance (PubMed:27259756).</text>
</comment>
<comment type="subcellular location">
    <subcellularLocation>
        <location evidence="4">Membrane</location>
        <topology evidence="4">Single-pass membrane protein</topology>
    </subcellularLocation>
    <subcellularLocation>
        <location evidence="3">Cytoplasm</location>
    </subcellularLocation>
    <subcellularLocation>
        <location evidence="2">Synapse</location>
    </subcellularLocation>
    <subcellularLocation>
        <location evidence="2">Cell projection</location>
        <location evidence="2">Growth cone</location>
    </subcellularLocation>
    <text evidence="2 3">Localized in the cytoplasm of cell bodies, dendrites and axons with occasional hints of an enrichment near the plasma membrane. Localized at the neuromuscular junction.</text>
</comment>
<comment type="disruption phenotype">
    <text evidence="11">Morpholino-induced knockdown affects tail morphology, and causes cardiac edema and abnormal swimming in response to tactile stimulation. Morphants show aberrant axons, either short or over-extended, with some axons appearing to branch to the adjacent myotome.</text>
</comment>
<comment type="similarity">
    <text evidence="9">Belongs to the TRAFAC class myosin-kinesin ATPase superfamily. Myosin family.</text>
</comment>
<name>MY9AA_DANRE</name>
<evidence type="ECO:0000250" key="1">
    <source>
        <dbReference type="UniProtKB" id="B2RTY4"/>
    </source>
</evidence>
<evidence type="ECO:0000250" key="2">
    <source>
        <dbReference type="UniProtKB" id="Q8C170"/>
    </source>
</evidence>
<evidence type="ECO:0000250" key="3">
    <source>
        <dbReference type="UniProtKB" id="Q9Z1N3"/>
    </source>
</evidence>
<evidence type="ECO:0000255" key="4"/>
<evidence type="ECO:0000255" key="5">
    <source>
        <dbReference type="PROSITE-ProRule" id="PRU00116"/>
    </source>
</evidence>
<evidence type="ECO:0000255" key="6">
    <source>
        <dbReference type="PROSITE-ProRule" id="PRU00166"/>
    </source>
</evidence>
<evidence type="ECO:0000255" key="7">
    <source>
        <dbReference type="PROSITE-ProRule" id="PRU00172"/>
    </source>
</evidence>
<evidence type="ECO:0000255" key="8">
    <source>
        <dbReference type="PROSITE-ProRule" id="PRU00226"/>
    </source>
</evidence>
<evidence type="ECO:0000255" key="9">
    <source>
        <dbReference type="PROSITE-ProRule" id="PRU00782"/>
    </source>
</evidence>
<evidence type="ECO:0000256" key="10">
    <source>
        <dbReference type="SAM" id="MobiDB-lite"/>
    </source>
</evidence>
<evidence type="ECO:0000269" key="11">
    <source>
    </source>
</evidence>
<proteinExistence type="inferred from homology"/>
<organism>
    <name type="scientific">Danio rerio</name>
    <name type="common">Zebrafish</name>
    <name type="synonym">Brachydanio rerio</name>
    <dbReference type="NCBI Taxonomy" id="7955"/>
    <lineage>
        <taxon>Eukaryota</taxon>
        <taxon>Metazoa</taxon>
        <taxon>Chordata</taxon>
        <taxon>Craniata</taxon>
        <taxon>Vertebrata</taxon>
        <taxon>Euteleostomi</taxon>
        <taxon>Actinopterygii</taxon>
        <taxon>Neopterygii</taxon>
        <taxon>Teleostei</taxon>
        <taxon>Ostariophysi</taxon>
        <taxon>Cypriniformes</taxon>
        <taxon>Danionidae</taxon>
        <taxon>Danioninae</taxon>
        <taxon>Danio</taxon>
    </lineage>
</organism>
<keyword id="KW-0009">Actin-binding</keyword>
<keyword id="KW-0067">ATP-binding</keyword>
<keyword id="KW-0966">Cell projection</keyword>
<keyword id="KW-0175">Coiled coil</keyword>
<keyword id="KW-0963">Cytoplasm</keyword>
<keyword id="KW-0343">GTPase activation</keyword>
<keyword id="KW-0472">Membrane</keyword>
<keyword id="KW-0479">Metal-binding</keyword>
<keyword id="KW-0505">Motor protein</keyword>
<keyword id="KW-0518">Myosin</keyword>
<keyword id="KW-0547">Nucleotide-binding</keyword>
<keyword id="KW-1185">Reference proteome</keyword>
<keyword id="KW-0677">Repeat</keyword>
<keyword id="KW-0770">Synapse</keyword>
<keyword id="KW-0812">Transmembrane</keyword>
<keyword id="KW-1133">Transmembrane helix</keyword>
<keyword id="KW-0862">Zinc</keyword>
<keyword id="KW-0863">Zinc-finger</keyword>
<dbReference type="EMBL" id="AL929115">
    <property type="status" value="NOT_ANNOTATED_CDS"/>
    <property type="molecule type" value="Genomic_DNA"/>
</dbReference>
<dbReference type="EMBL" id="BX470121">
    <property type="status" value="NOT_ANNOTATED_CDS"/>
    <property type="molecule type" value="Genomic_DNA"/>
</dbReference>
<dbReference type="EMBL" id="CR388017">
    <property type="status" value="NOT_ANNOTATED_CDS"/>
    <property type="molecule type" value="Genomic_DNA"/>
</dbReference>
<dbReference type="EMBL" id="CT030707">
    <property type="status" value="NOT_ANNOTATED_CDS"/>
    <property type="molecule type" value="Genomic_DNA"/>
</dbReference>
<dbReference type="RefSeq" id="NP_001410744.1">
    <property type="nucleotide sequence ID" value="NM_001423815.1"/>
</dbReference>
<dbReference type="RefSeq" id="XP_009301790.1">
    <property type="nucleotide sequence ID" value="XM_009303515.2"/>
</dbReference>
<dbReference type="SMR" id="E7EZG2"/>
<dbReference type="FunCoup" id="E7EZG2">
    <property type="interactions" value="904"/>
</dbReference>
<dbReference type="STRING" id="7955.ENSDARP00000039809"/>
<dbReference type="PaxDb" id="7955-ENSDARP00000039809"/>
<dbReference type="PeptideAtlas" id="E7EZG2"/>
<dbReference type="Ensembl" id="ENSDART00000039810">
    <property type="protein sequence ID" value="ENSDARP00000039809"/>
    <property type="gene ID" value="ENSDARG00000076729"/>
</dbReference>
<dbReference type="GeneID" id="100006612"/>
<dbReference type="AGR" id="ZFIN:ZDB-GENE-080424-5"/>
<dbReference type="eggNOG" id="KOG1453">
    <property type="taxonomic scope" value="Eukaryota"/>
</dbReference>
<dbReference type="eggNOG" id="KOG4229">
    <property type="taxonomic scope" value="Eukaryota"/>
</dbReference>
<dbReference type="HOGENOM" id="CLU_000192_2_2_1"/>
<dbReference type="InParanoid" id="E7EZG2"/>
<dbReference type="OMA" id="SWTNIEY"/>
<dbReference type="OrthoDB" id="437889at2759"/>
<dbReference type="PhylomeDB" id="E7EZG2"/>
<dbReference type="TreeFam" id="TF319651"/>
<dbReference type="Reactome" id="R-DRE-8980692">
    <property type="pathway name" value="RHOA GTPase cycle"/>
</dbReference>
<dbReference type="Reactome" id="R-DRE-9013424">
    <property type="pathway name" value="RHOV GTPase cycle"/>
</dbReference>
<dbReference type="PRO" id="PR:E7EZG2"/>
<dbReference type="Proteomes" id="UP000000437">
    <property type="component" value="Chromosome 7"/>
</dbReference>
<dbReference type="Bgee" id="ENSDARG00000076729">
    <property type="expression patterns" value="Expressed in retina and 22 other cell types or tissues"/>
</dbReference>
<dbReference type="GO" id="GO:0005884">
    <property type="term" value="C:actin filament"/>
    <property type="evidence" value="ECO:0000318"/>
    <property type="project" value="GO_Central"/>
</dbReference>
<dbReference type="GO" id="GO:0044295">
    <property type="term" value="C:axonal growth cone"/>
    <property type="evidence" value="ECO:0000318"/>
    <property type="project" value="GO_Central"/>
</dbReference>
<dbReference type="GO" id="GO:0005737">
    <property type="term" value="C:cytoplasm"/>
    <property type="evidence" value="ECO:0007669"/>
    <property type="project" value="UniProtKB-SubCell"/>
</dbReference>
<dbReference type="GO" id="GO:0016020">
    <property type="term" value="C:membrane"/>
    <property type="evidence" value="ECO:0007669"/>
    <property type="project" value="UniProtKB-SubCell"/>
</dbReference>
<dbReference type="GO" id="GO:0016459">
    <property type="term" value="C:myosin complex"/>
    <property type="evidence" value="ECO:0007669"/>
    <property type="project" value="UniProtKB-KW"/>
</dbReference>
<dbReference type="GO" id="GO:0045202">
    <property type="term" value="C:synapse"/>
    <property type="evidence" value="ECO:0007669"/>
    <property type="project" value="UniProtKB-SubCell"/>
</dbReference>
<dbReference type="GO" id="GO:0051015">
    <property type="term" value="F:actin filament binding"/>
    <property type="evidence" value="ECO:0000318"/>
    <property type="project" value="GO_Central"/>
</dbReference>
<dbReference type="GO" id="GO:0005524">
    <property type="term" value="F:ATP binding"/>
    <property type="evidence" value="ECO:0007669"/>
    <property type="project" value="UniProtKB-KW"/>
</dbReference>
<dbReference type="GO" id="GO:0005096">
    <property type="term" value="F:GTPase activator activity"/>
    <property type="evidence" value="ECO:0007669"/>
    <property type="project" value="UniProtKB-KW"/>
</dbReference>
<dbReference type="GO" id="GO:0000146">
    <property type="term" value="F:microfilament motor activity"/>
    <property type="evidence" value="ECO:0000318"/>
    <property type="project" value="GO_Central"/>
</dbReference>
<dbReference type="GO" id="GO:0008270">
    <property type="term" value="F:zinc ion binding"/>
    <property type="evidence" value="ECO:0007669"/>
    <property type="project" value="UniProtKB-KW"/>
</dbReference>
<dbReference type="GO" id="GO:0061564">
    <property type="term" value="P:axon development"/>
    <property type="evidence" value="ECO:0000316"/>
    <property type="project" value="ZFIN"/>
</dbReference>
<dbReference type="GO" id="GO:0048675">
    <property type="term" value="P:axon extension"/>
    <property type="evidence" value="ECO:0000316"/>
    <property type="project" value="ZFIN"/>
</dbReference>
<dbReference type="GO" id="GO:0045198">
    <property type="term" value="P:establishment of epithelial cell apical/basal polarity"/>
    <property type="evidence" value="ECO:0000318"/>
    <property type="project" value="GO_Central"/>
</dbReference>
<dbReference type="GO" id="GO:0035556">
    <property type="term" value="P:intracellular signal transduction"/>
    <property type="evidence" value="ECO:0007669"/>
    <property type="project" value="InterPro"/>
</dbReference>
<dbReference type="GO" id="GO:0007626">
    <property type="term" value="P:locomotory behavior"/>
    <property type="evidence" value="ECO:0000316"/>
    <property type="project" value="ZFIN"/>
</dbReference>
<dbReference type="GO" id="GO:0098529">
    <property type="term" value="P:neuromuscular junction development, skeletal muscle fiber"/>
    <property type="evidence" value="ECO:0000316"/>
    <property type="project" value="ZFIN"/>
</dbReference>
<dbReference type="GO" id="GO:0036269">
    <property type="term" value="P:swimming behavior"/>
    <property type="evidence" value="ECO:0000316"/>
    <property type="project" value="ZFIN"/>
</dbReference>
<dbReference type="CDD" id="cd20883">
    <property type="entry name" value="C1_Myosin-IXa"/>
    <property type="match status" value="1"/>
</dbReference>
<dbReference type="CDD" id="cd01385">
    <property type="entry name" value="MYSc_Myo9"/>
    <property type="match status" value="1"/>
</dbReference>
<dbReference type="CDD" id="cd17216">
    <property type="entry name" value="RA_Myosin-IXa"/>
    <property type="match status" value="1"/>
</dbReference>
<dbReference type="FunFam" id="1.20.120.720:FF:000003">
    <property type="entry name" value="Putative unconventional myosin-IXa"/>
    <property type="match status" value="1"/>
</dbReference>
<dbReference type="FunFam" id="3.30.60.20:FF:000020">
    <property type="entry name" value="Putative unconventional myosin-IXa"/>
    <property type="match status" value="1"/>
</dbReference>
<dbReference type="FunFam" id="3.40.850.10:FF:000008">
    <property type="entry name" value="Putative unconventional myosin-IXa"/>
    <property type="match status" value="1"/>
</dbReference>
<dbReference type="FunFam" id="1.10.10.820:FF:000003">
    <property type="entry name" value="unconventional myosin-IXa isoform X1"/>
    <property type="match status" value="1"/>
</dbReference>
<dbReference type="FunFam" id="1.10.555.10:FF:000009">
    <property type="entry name" value="unconventional myosin-IXa isoform X1"/>
    <property type="match status" value="1"/>
</dbReference>
<dbReference type="FunFam" id="1.20.58.530:FF:000005">
    <property type="entry name" value="unconventional myosin-IXa isoform X1"/>
    <property type="match status" value="1"/>
</dbReference>
<dbReference type="FunFam" id="3.10.20.90:FF:000121">
    <property type="entry name" value="unconventional myosin-IXa isoform X1"/>
    <property type="match status" value="1"/>
</dbReference>
<dbReference type="FunFam" id="3.40.850.10:FF:000013">
    <property type="entry name" value="unconventional myosin-IXa isoform X1"/>
    <property type="match status" value="1"/>
</dbReference>
<dbReference type="FunFam" id="1.20.58.530:FF:000009">
    <property type="entry name" value="unconventional myosin-IXb isoform X1"/>
    <property type="match status" value="1"/>
</dbReference>
<dbReference type="Gene3D" id="1.10.10.820">
    <property type="match status" value="1"/>
</dbReference>
<dbReference type="Gene3D" id="1.20.5.190">
    <property type="match status" value="3"/>
</dbReference>
<dbReference type="Gene3D" id="1.20.58.530">
    <property type="match status" value="2"/>
</dbReference>
<dbReference type="Gene3D" id="3.30.60.20">
    <property type="match status" value="1"/>
</dbReference>
<dbReference type="Gene3D" id="6.20.240.20">
    <property type="match status" value="1"/>
</dbReference>
<dbReference type="Gene3D" id="3.40.850.10">
    <property type="entry name" value="Kinesin motor domain"/>
    <property type="match status" value="2"/>
</dbReference>
<dbReference type="Gene3D" id="1.20.120.720">
    <property type="entry name" value="Myosin VI head, motor domain, U50 subdomain"/>
    <property type="match status" value="1"/>
</dbReference>
<dbReference type="Gene3D" id="3.10.20.90">
    <property type="entry name" value="Phosphatidylinositol 3-kinase Catalytic Subunit, Chain A, domain 1"/>
    <property type="match status" value="1"/>
</dbReference>
<dbReference type="Gene3D" id="1.10.555.10">
    <property type="entry name" value="Rho GTPase activation protein"/>
    <property type="match status" value="1"/>
</dbReference>
<dbReference type="InterPro" id="IPR046349">
    <property type="entry name" value="C1-like_sf"/>
</dbReference>
<dbReference type="InterPro" id="IPR000048">
    <property type="entry name" value="IQ_motif_EF-hand-BS"/>
</dbReference>
<dbReference type="InterPro" id="IPR036961">
    <property type="entry name" value="Kinesin_motor_dom_sf"/>
</dbReference>
<dbReference type="InterPro" id="IPR046987">
    <property type="entry name" value="Myo9"/>
</dbReference>
<dbReference type="InterPro" id="IPR001609">
    <property type="entry name" value="Myosin_head_motor_dom-like"/>
</dbReference>
<dbReference type="InterPro" id="IPR036023">
    <property type="entry name" value="MYSc_Myo9"/>
</dbReference>
<dbReference type="InterPro" id="IPR027417">
    <property type="entry name" value="P-loop_NTPase"/>
</dbReference>
<dbReference type="InterPro" id="IPR002219">
    <property type="entry name" value="PE/DAG-bd"/>
</dbReference>
<dbReference type="InterPro" id="IPR000159">
    <property type="entry name" value="RA_dom"/>
</dbReference>
<dbReference type="InterPro" id="IPR028558">
    <property type="entry name" value="RA_Myosin-IXa"/>
</dbReference>
<dbReference type="InterPro" id="IPR008936">
    <property type="entry name" value="Rho_GTPase_activation_prot"/>
</dbReference>
<dbReference type="InterPro" id="IPR000198">
    <property type="entry name" value="RhoGAP_dom"/>
</dbReference>
<dbReference type="InterPro" id="IPR029071">
    <property type="entry name" value="Ubiquitin-like_domsf"/>
</dbReference>
<dbReference type="PANTHER" id="PTHR46184:SF3">
    <property type="entry name" value="UNCONVENTIONAL MYOSIN-IXA"/>
    <property type="match status" value="1"/>
</dbReference>
<dbReference type="PANTHER" id="PTHR46184">
    <property type="entry name" value="UNCONVENTIONAL MYOSIN-IXB-LIKE PROTEIN"/>
    <property type="match status" value="1"/>
</dbReference>
<dbReference type="Pfam" id="PF00130">
    <property type="entry name" value="C1_1"/>
    <property type="match status" value="1"/>
</dbReference>
<dbReference type="Pfam" id="PF00612">
    <property type="entry name" value="IQ"/>
    <property type="match status" value="3"/>
</dbReference>
<dbReference type="Pfam" id="PF00063">
    <property type="entry name" value="Myosin_head"/>
    <property type="match status" value="2"/>
</dbReference>
<dbReference type="Pfam" id="PF00788">
    <property type="entry name" value="RA"/>
    <property type="match status" value="1"/>
</dbReference>
<dbReference type="Pfam" id="PF00620">
    <property type="entry name" value="RhoGAP"/>
    <property type="match status" value="1"/>
</dbReference>
<dbReference type="PRINTS" id="PR00193">
    <property type="entry name" value="MYOSINHEAVY"/>
</dbReference>
<dbReference type="SMART" id="SM00109">
    <property type="entry name" value="C1"/>
    <property type="match status" value="1"/>
</dbReference>
<dbReference type="SMART" id="SM00015">
    <property type="entry name" value="IQ"/>
    <property type="match status" value="4"/>
</dbReference>
<dbReference type="SMART" id="SM00242">
    <property type="entry name" value="MYSc"/>
    <property type="match status" value="1"/>
</dbReference>
<dbReference type="SMART" id="SM00314">
    <property type="entry name" value="RA"/>
    <property type="match status" value="1"/>
</dbReference>
<dbReference type="SMART" id="SM00324">
    <property type="entry name" value="RhoGAP"/>
    <property type="match status" value="1"/>
</dbReference>
<dbReference type="SUPFAM" id="SSF57889">
    <property type="entry name" value="Cysteine-rich domain"/>
    <property type="match status" value="1"/>
</dbReference>
<dbReference type="SUPFAM" id="SSF48350">
    <property type="entry name" value="GTPase activation domain, GAP"/>
    <property type="match status" value="1"/>
</dbReference>
<dbReference type="SUPFAM" id="SSF52540">
    <property type="entry name" value="P-loop containing nucleoside triphosphate hydrolases"/>
    <property type="match status" value="1"/>
</dbReference>
<dbReference type="SUPFAM" id="SSF54236">
    <property type="entry name" value="Ubiquitin-like"/>
    <property type="match status" value="1"/>
</dbReference>
<dbReference type="PROSITE" id="PS50096">
    <property type="entry name" value="IQ"/>
    <property type="match status" value="3"/>
</dbReference>
<dbReference type="PROSITE" id="PS51456">
    <property type="entry name" value="MYOSIN_MOTOR"/>
    <property type="match status" value="1"/>
</dbReference>
<dbReference type="PROSITE" id="PS50200">
    <property type="entry name" value="RA"/>
    <property type="match status" value="1"/>
</dbReference>
<dbReference type="PROSITE" id="PS50238">
    <property type="entry name" value="RHOGAP"/>
    <property type="match status" value="1"/>
</dbReference>
<dbReference type="PROSITE" id="PS00479">
    <property type="entry name" value="ZF_DAG_PE_1"/>
    <property type="match status" value="1"/>
</dbReference>
<dbReference type="PROSITE" id="PS50081">
    <property type="entry name" value="ZF_DAG_PE_2"/>
    <property type="match status" value="1"/>
</dbReference>
<gene>
    <name type="primary">myo9aa</name>
    <name type="synonym">myo9al1</name>
</gene>
<sequence>MSVHDVGGRRRFEDSELTLRIYPGIIAEGTIYCPVAARKITSAAEVIEQVIDRLQLDRTKCYVLAEVKEFGGEEWILNPTDYPVQRMMLWPRMALENRFSSEDYRFLLREKNLDGSIHYGNLQMWLQVTEERRRMVERGFLPQPLPKDFDDLCNLPDLNEKTLLDNLRSRFKQEKIYTYVGSILIVINPFKFLPIYNPKYVKMYDNHQLGKLEPHIYAVADVAYHAMLQSRQNQCIVISGESGSGKTQSTNFLIHHLTALSQKGFASGVEQIILGAGPVLEAFGNAKTAHNNNSSRFGKFIQVNYQESGTVRGAYVEKYLLEKSRLVYQEHNERNYHVFYYLLAGTSEEERTAFHLKKPEEYHYLNQMTKKPHRPHWGNYYENEPDCFTVEGEDLKHDFERLQLAMEMVGFLPTTRKQIFSLLSAILHLGNIRYKKKIYRDDSIDICNPEVLPVVSELLEVKEEMLFEALTTRKTVTVGEKLIVPYKLAEAGTVRDSMAKSLYSALFDWIVFRINHALLNQRDLEESAKILSIGVLDIFGFEDYENNSFEQFCINFANERLQHYFNQHIFKLEQEEYRAEGITWHNIDYIDNTSCITLISKKPTALLHLLDEECNFPQATNQTLLDKFKRQHEGNSYIEFPAVMEPAFIIKHYAGKVKYGVKDFREKNTDHMRPDIVALLKSSKNAFICGLIGIDPVATFRWAVLRAYFRAMVAFRDAGKRHVEKRSGHDAAAPAVKSVDSFSFLHHPVHQRSLEILQRCKEEKYSVNRRNPRTPLSDLQGSNAINQREGWNGRPGRQNRLSSFGSFSEEEGIFINSTSSKLLERAHGILMRNKNYKMKPSLPKHLLDVKSLKYLSNLTLQDRITKSLLHLHKKKKPPSISAQFQASLNKLMETLGQSQPYFVKCIRSNSEKLPLRFNDSLVLRQLRYTGMLETVRIRQSGYSIKYTFQDFARHFHVLLPEGSNQASQEAIRQYLQQVDLTPEGFQVGRTMVFLREIERQRLQDLLHKEVLSRIVYLQRRFRALLERKNFLRVRQAACQIQNWWRSCQSLQRDSQLEYDMRVQEGAVVCIQSAWRGFRERRRLLLWREASVLIQRTWRLYRQRRAALQIQTAWRRHRARELFLRQRDATIRLQAVGRGYLARQRFRELQKQRLKITHLPNGKASLLTEEDKLEDMGLDASMLEDSFEEQDRSKQALSSAVEASGAGVLEEMEVEMMEGMAPAQPSPEVTIRERPRTLEDPNQRTRAKRESRRMRELEQAKFSLELLKVRSTGGTSPSDERRWSMELVSEIAHTPQGTPDSQSSKGSFELLNIDDYFKDKAPCAEPEDLGSPSSVPDQHNVLPSDTSTPDILSKPDDQSKPPRMQYSLPTFYTPPSESSSLVIKSTTNSVTPCPDGLSKPSKDKKESTRRPMVVVISMQKETLLNEADVKPLEVKDSAAQTSEPPSPAQPSTDSSYVLEKLEKLNEEKEERQKHQRQQNEKEMMEQIRQQTHILEEQRRNLVQNEREKLEKQRAETLRRIEQSRQESSGGRTDRPAPIAQPEPDLTSQRPAREKDGAPLILRDRPKDAQNLAEGWAPKLTLESRGDEARSRINKKPSNQNVNISMSERPGNIFFSPKTKIAYSKLNKDLANQEKTPGAQNEVSLLGYKSTKTEVGRPGHKKARMARTRSDFLTRSSSTQGEGESEEEEYDETPLYAGTPLPKQDSEESAVEACHSDSEMLTTAAEEQKNRCKTLPSGELGKHDTRKNSHGDGRVRGKMRFWGKAKNAEKKSSRERLLCGSDTLEGDYTEATLLMEEGVERLSPPHSPDLTLQREFKENKEPSPKVKRRRSVKISSVALEPVQWQNDALQILTCTSDYKSMNDFLMKKITDLDTEDGKKDTMVDVVFKKALKEFRVNIFNSYSTALAMDDGKSIRYKDLYALFEQILEKNMRQEQRDWSESPVKVWVNTFKVFLDEFMTEHKPLDSSLGKAPKPDRKKRRKKDTDVVEEHNGHIFKSTQYSIPTYCEYCSSLIWMMDKACVCKLCRYACHRKCCQKMTTKCSKKYDPELSSRQFGVELSRLTNDERTVPLVVEKLVNYIEMHGLYTEGIYRKSGSTNKIKELKQGLDTDVNGVNLDDYNINVIASVFKQWLRDLPNPLMTFELYEEFLRAMGLQDKKEVIRGVYSVIDQLSRTHLNTLERLIFHLVRIALQEETNRMSANALAIVFAPCILRCPDTIDPLRSVQDIGKTTACVELIICEQMNKYRARLKDINTLEFAENKAKSRLTFIRRSMGKGPVHRLRYRTPSPPTSPRSPTAPEVMQDSGEEEPGRDPEVSEQQQVAMQQEEKVLTEQIESLQKEKEELTFEMLALEPRASDDETLESEASIGTADSSENLNVDSEGATSDYSERGPALAATRPKKSEGKSRRVLRKQPESLDSIDSCSTVSSVSSSYMQPTSRTHKLSLRSKSPSKRLYLSSPSESLDQPEQDGEERPQFTSRGTFNPEKGKQRLQGAKSSPQRHREQKKDPELSPQQVVVYGSNEFMV</sequence>
<protein>
    <recommendedName>
        <fullName evidence="1">Unconventional myosin-IXAa</fullName>
    </recommendedName>
    <alternativeName>
        <fullName>Myosin IXAa</fullName>
    </alternativeName>
</protein>